<organism>
    <name type="scientific">Gallus gallus</name>
    <name type="common">Chicken</name>
    <dbReference type="NCBI Taxonomy" id="9031"/>
    <lineage>
        <taxon>Eukaryota</taxon>
        <taxon>Metazoa</taxon>
        <taxon>Chordata</taxon>
        <taxon>Craniata</taxon>
        <taxon>Vertebrata</taxon>
        <taxon>Euteleostomi</taxon>
        <taxon>Archelosauria</taxon>
        <taxon>Archosauria</taxon>
        <taxon>Dinosauria</taxon>
        <taxon>Saurischia</taxon>
        <taxon>Theropoda</taxon>
        <taxon>Coelurosauria</taxon>
        <taxon>Aves</taxon>
        <taxon>Neognathae</taxon>
        <taxon>Galloanserae</taxon>
        <taxon>Galliformes</taxon>
        <taxon>Phasianidae</taxon>
        <taxon>Phasianinae</taxon>
        <taxon>Gallus</taxon>
    </lineage>
</organism>
<feature type="chain" id="PRO_0000305914" description="Mediator of RNA polymerase II transcription subunit 24">
    <location>
        <begin position="1"/>
        <end position="986"/>
    </location>
</feature>
<feature type="short sequence motif" description="LXXLL motif 1">
    <location>
        <begin position="128"/>
        <end position="132"/>
    </location>
</feature>
<feature type="short sequence motif" description="LXXLL motif 2">
    <location>
        <begin position="341"/>
        <end position="345"/>
    </location>
</feature>
<feature type="short sequence motif" description="LXXLL motif 3">
    <location>
        <begin position="445"/>
        <end position="449"/>
    </location>
</feature>
<feature type="short sequence motif" description="LXXLL motif 4">
    <location>
        <begin position="554"/>
        <end position="558"/>
    </location>
</feature>
<feature type="short sequence motif" description="LXXLL motif 5">
    <location>
        <begin position="785"/>
        <end position="789"/>
    </location>
</feature>
<feature type="short sequence motif" description="LXXLL motif 6">
    <location>
        <begin position="855"/>
        <end position="859"/>
    </location>
</feature>
<gene>
    <name type="primary">MED24</name>
    <name type="ORF">RCJMB04_13m7</name>
</gene>
<name>MED24_CHICK</name>
<evidence type="ECO:0000250" key="1"/>
<evidence type="ECO:0000305" key="2"/>
<comment type="function">
    <text evidence="1">Component of the Mediator complex, a coactivator involved in the regulated transcription of nearly all RNA polymerase II-dependent genes. Mediator functions as a bridge to convey information from gene-specific regulatory proteins to the basal RNA polymerase II transcription machinery. Mediator is recruited to promoters by direct interactions with regulatory proteins and serves as a scaffold for the assembly of a functional preinitiation complex with RNA polymerase II and the general transcription factors (By similarity).</text>
</comment>
<comment type="subunit">
    <text evidence="1">Component of the Mediator complex.</text>
</comment>
<comment type="subcellular location">
    <subcellularLocation>
        <location evidence="2">Nucleus</location>
    </subcellularLocation>
</comment>
<comment type="similarity">
    <text evidence="2">Belongs to the Mediator complex subunit 24 family.</text>
</comment>
<sequence length="986" mass="110844">MKVVNLKQAILQAWKERWSDYQWAINMKRFFPRGATWDILNLAEALLEQAMIGPSPNPLILSYLKYAISSQMVSYSTVLTAISKFDDFSRDLCVQSLLEIMDMFCDRLSCHGRAEECIGLCRALMSALNWLLRCAAFYAEKVKEMLEQVAAEGQMKMCLERLEKMLSSTKNRALIHIAQLEETSSWNAVEQSLLKLEESLNGLSNSTLRSQADDCISLIKSIPTMLSVRSEQLNKTGFPTVHAVVLLEGTMNLTGEIQPLVEQLMMVKRMQRIPPPLFMLEIWKACFVGLIESPEGTEELKWTAFTFLKIPQVLVELKNYPHGDKDFTEDVNCAFEFLLKLTPLLDKADQRCNCNCMSLLLQECSKQGLLSEANMTNLTDKRKADREDAPQLQSAENANIQPNPRLILRAEPTVTNILKTMDADHSKSPEGLLGVLGHMLSGKSLDLLLAAAAATGKLKSFAWKFIKLNEFTKHISTENSKSAPVRALLFDISFLMLCHVAQTYGSEVILSESRPADEVPFFETWMLTCMPEEGKILNPDHPCFRPDSTKVESLVALLNNSSEMKLVQINWHEVCLSISAAILEILNAWENSVLTFESIQKITDNIKGKVCSMAVCAVAWLVAHVRMLGLDEREKSLQMIRQLATPLYGDNTLQFYNERVVIMSSILEHMCADVLQQTATQIKFPSTGMDTIPYWNLLPPKKPIKEVLTSVFTKVLEKGWVDSRSIHIFDSLLHMGGVYWFCNNLVKELLKETRKEHTLRAVELLYAIFCLDMQQLTLTLLGHILPNLLTDSSKWHTLMDPPGKALAKLSVWCALSSYSSHNKGQASARQKKRHREDIEDYISLFPLDDTRPSKLMRLLSSNEEDANILSSPNRSMSSSLSASQLHAVSMRDPLNRVLANLFLLISSILGSKTAGTHTQFVQWFMEECVDCLEQGSHGSILQFMPFTMVSELVKVSTMSSPKIVLAITDLGLPLGRRVAAKAIAAL</sequence>
<protein>
    <recommendedName>
        <fullName>Mediator of RNA polymerase II transcription subunit 24</fullName>
    </recommendedName>
    <alternativeName>
        <fullName>Mediator complex subunit 24</fullName>
    </alternativeName>
</protein>
<keyword id="KW-0010">Activator</keyword>
<keyword id="KW-0539">Nucleus</keyword>
<keyword id="KW-1185">Reference proteome</keyword>
<keyword id="KW-0677">Repeat</keyword>
<keyword id="KW-0804">Transcription</keyword>
<keyword id="KW-0805">Transcription regulation</keyword>
<reference key="1">
    <citation type="journal article" date="2005" name="Genome Biol.">
        <title>Full-length cDNAs from chicken bursal lymphocytes to facilitate gene function analysis.</title>
        <authorList>
            <person name="Caldwell R.B."/>
            <person name="Kierzek A.M."/>
            <person name="Arakawa H."/>
            <person name="Bezzubov Y."/>
            <person name="Zaim J."/>
            <person name="Fiedler P."/>
            <person name="Kutter S."/>
            <person name="Blagodatski A."/>
            <person name="Kostovska D."/>
            <person name="Koter M."/>
            <person name="Plachy J."/>
            <person name="Carninci P."/>
            <person name="Hayashizaki Y."/>
            <person name="Buerstedde J.-M."/>
        </authorList>
    </citation>
    <scope>NUCLEOTIDE SEQUENCE [LARGE SCALE MRNA]</scope>
    <source>
        <strain>CB</strain>
        <tissue>Bursa of Fabricius</tissue>
    </source>
</reference>
<accession>Q5F3M0</accession>
<dbReference type="EMBL" id="AJ851630">
    <property type="protein sequence ID" value="CAH65264.1"/>
    <property type="molecule type" value="mRNA"/>
</dbReference>
<dbReference type="RefSeq" id="NP_001026534.1">
    <property type="nucleotide sequence ID" value="NM_001031363.1"/>
</dbReference>
<dbReference type="SMR" id="Q5F3M0"/>
<dbReference type="FunCoup" id="Q5F3M0">
    <property type="interactions" value="1963"/>
</dbReference>
<dbReference type="STRING" id="9031.ENSGALP00000021958"/>
<dbReference type="PaxDb" id="9031-ENSGALP00000021958"/>
<dbReference type="GeneID" id="426134"/>
<dbReference type="KEGG" id="gga:426134"/>
<dbReference type="CTD" id="9862"/>
<dbReference type="VEuPathDB" id="HostDB:geneid_426134"/>
<dbReference type="eggNOG" id="ENOG502QPJD">
    <property type="taxonomic scope" value="Eukaryota"/>
</dbReference>
<dbReference type="InParanoid" id="Q5F3M0"/>
<dbReference type="OrthoDB" id="21216at2759"/>
<dbReference type="PhylomeDB" id="Q5F3M0"/>
<dbReference type="PRO" id="PR:Q5F3M0"/>
<dbReference type="Proteomes" id="UP000000539">
    <property type="component" value="Unassembled WGS sequence"/>
</dbReference>
<dbReference type="GO" id="GO:0016592">
    <property type="term" value="C:mediator complex"/>
    <property type="evidence" value="ECO:0000318"/>
    <property type="project" value="GO_Central"/>
</dbReference>
<dbReference type="GO" id="GO:0005634">
    <property type="term" value="C:nucleus"/>
    <property type="evidence" value="ECO:0000250"/>
    <property type="project" value="AgBase"/>
</dbReference>
<dbReference type="GO" id="GO:0046966">
    <property type="term" value="F:nuclear thyroid hormone receptor binding"/>
    <property type="evidence" value="ECO:0000250"/>
    <property type="project" value="AgBase"/>
</dbReference>
<dbReference type="GO" id="GO:0003713">
    <property type="term" value="F:transcription coactivator activity"/>
    <property type="evidence" value="ECO:0000250"/>
    <property type="project" value="AgBase"/>
</dbReference>
<dbReference type="GO" id="GO:0003712">
    <property type="term" value="F:transcription coregulator activity"/>
    <property type="evidence" value="ECO:0000318"/>
    <property type="project" value="GO_Central"/>
</dbReference>
<dbReference type="GO" id="GO:0045893">
    <property type="term" value="P:positive regulation of DNA-templated transcription"/>
    <property type="evidence" value="ECO:0000250"/>
    <property type="project" value="AgBase"/>
</dbReference>
<dbReference type="GO" id="GO:0060261">
    <property type="term" value="P:positive regulation of transcription initiation by RNA polymerase II"/>
    <property type="evidence" value="ECO:0000250"/>
    <property type="project" value="AgBase"/>
</dbReference>
<dbReference type="InterPro" id="IPR021429">
    <property type="entry name" value="Mediator_Med24"/>
</dbReference>
<dbReference type="PANTHER" id="PTHR12898">
    <property type="entry name" value="MEDIATOR OF RNA POLYMERASE II TRANSCRIPTION SUBUNIT 24"/>
    <property type="match status" value="1"/>
</dbReference>
<dbReference type="PANTHER" id="PTHR12898:SF1">
    <property type="entry name" value="MEDIATOR OF RNA POLYMERASE II TRANSCRIPTION SUBUNIT 24"/>
    <property type="match status" value="1"/>
</dbReference>
<dbReference type="Pfam" id="PF11277">
    <property type="entry name" value="Med24_N"/>
    <property type="match status" value="1"/>
</dbReference>
<proteinExistence type="evidence at transcript level"/>